<protein>
    <recommendedName>
        <fullName evidence="1">Putative transport protein YbjL</fullName>
    </recommendedName>
</protein>
<name>YBJL_ECO27</name>
<organism>
    <name type="scientific">Escherichia coli O127:H6 (strain E2348/69 / EPEC)</name>
    <dbReference type="NCBI Taxonomy" id="574521"/>
    <lineage>
        <taxon>Bacteria</taxon>
        <taxon>Pseudomonadati</taxon>
        <taxon>Pseudomonadota</taxon>
        <taxon>Gammaproteobacteria</taxon>
        <taxon>Enterobacterales</taxon>
        <taxon>Enterobacteriaceae</taxon>
        <taxon>Escherichia</taxon>
    </lineage>
</organism>
<sequence length="561" mass="60351">MNINVAELLNGNYILLLFVVLALGLCLGKLRLGSIQLGNSIGVLVVSLLLGQQHFSINTDALNLGFMLFIFCVGVEAGPNFFSIFFRDGKNYLMLALVMVGSALVIALGLGKLFGWDIGLTAGMLAGSMTSTPVLVGAGDTLRHSGMESRQLSLALDNLSLGYALTYLIGLVSLIVGARYLPKLQHQDLQTSAQQIARERGLDTDANRKVYLPVIRAYRVGPELVAWTDGKNLRELGIYRQTGCYIERIRRNGILANPDGDAVLQMGDEIALVGYPDAHARLDPSFRNGKEVFDRDLLDMRIVTEEVVVKNHNAVGKRLAQLKLTDHGCFLNRVIRSQIEMPIDDNVVLNKGDVLQVSGDARRVKTIADRIGFISIHSQVTDLLAFCAFFVIGLMIGMITFQFSTFSFGMGNAAGLLFAGIMLGFMRANHPTFGYIPQGALSMVKEFGLMVFMAGVGLSAGSGINNGLGAIGGQMLIAGLIVSLVPVVICFLFGAYVLRMNRALLFGAMMGARTCAPAMEIISDTARSNIPALGYAGTYAIANVLLTLAGTIIVMVWPGLG</sequence>
<proteinExistence type="inferred from homology"/>
<accession>B7UMT9</accession>
<gene>
    <name evidence="1" type="primary">ybjL</name>
    <name type="ordered locus">E2348C_0844</name>
</gene>
<comment type="subcellular location">
    <subcellularLocation>
        <location evidence="1">Cell membrane</location>
        <topology evidence="1">Multi-pass membrane protein</topology>
    </subcellularLocation>
</comment>
<comment type="similarity">
    <text evidence="1">Belongs to the AAE transporter (TC 2.A.81) family. YbjL subfamily.</text>
</comment>
<keyword id="KW-1003">Cell membrane</keyword>
<keyword id="KW-0472">Membrane</keyword>
<keyword id="KW-1185">Reference proteome</keyword>
<keyword id="KW-0677">Repeat</keyword>
<keyword id="KW-0812">Transmembrane</keyword>
<keyword id="KW-1133">Transmembrane helix</keyword>
<keyword id="KW-0813">Transport</keyword>
<reference key="1">
    <citation type="journal article" date="2009" name="J. Bacteriol.">
        <title>Complete genome sequence and comparative genome analysis of enteropathogenic Escherichia coli O127:H6 strain E2348/69.</title>
        <authorList>
            <person name="Iguchi A."/>
            <person name="Thomson N.R."/>
            <person name="Ogura Y."/>
            <person name="Saunders D."/>
            <person name="Ooka T."/>
            <person name="Henderson I.R."/>
            <person name="Harris D."/>
            <person name="Asadulghani M."/>
            <person name="Kurokawa K."/>
            <person name="Dean P."/>
            <person name="Kenny B."/>
            <person name="Quail M.A."/>
            <person name="Thurston S."/>
            <person name="Dougan G."/>
            <person name="Hayashi T."/>
            <person name="Parkhill J."/>
            <person name="Frankel G."/>
        </authorList>
    </citation>
    <scope>NUCLEOTIDE SEQUENCE [LARGE SCALE GENOMIC DNA]</scope>
    <source>
        <strain>E2348/69 / EPEC</strain>
    </source>
</reference>
<dbReference type="EMBL" id="FM180568">
    <property type="protein sequence ID" value="CAS08392.1"/>
    <property type="molecule type" value="Genomic_DNA"/>
</dbReference>
<dbReference type="RefSeq" id="WP_001024876.1">
    <property type="nucleotide sequence ID" value="NC_011601.1"/>
</dbReference>
<dbReference type="SMR" id="B7UMT9"/>
<dbReference type="KEGG" id="ecg:E2348C_0844"/>
<dbReference type="HOGENOM" id="CLU_035023_2_2_6"/>
<dbReference type="Proteomes" id="UP000008205">
    <property type="component" value="Chromosome"/>
</dbReference>
<dbReference type="GO" id="GO:0005886">
    <property type="term" value="C:plasma membrane"/>
    <property type="evidence" value="ECO:0007669"/>
    <property type="project" value="UniProtKB-SubCell"/>
</dbReference>
<dbReference type="GO" id="GO:0008324">
    <property type="term" value="F:monoatomic cation transmembrane transporter activity"/>
    <property type="evidence" value="ECO:0007669"/>
    <property type="project" value="InterPro"/>
</dbReference>
<dbReference type="GO" id="GO:0006813">
    <property type="term" value="P:potassium ion transport"/>
    <property type="evidence" value="ECO:0007669"/>
    <property type="project" value="InterPro"/>
</dbReference>
<dbReference type="FunFam" id="3.30.70.1450:FF:000003">
    <property type="entry name" value="Putative transport protein YbjL"/>
    <property type="match status" value="1"/>
</dbReference>
<dbReference type="Gene3D" id="3.30.70.1450">
    <property type="entry name" value="Regulator of K+ conductance, C-terminal domain"/>
    <property type="match status" value="2"/>
</dbReference>
<dbReference type="HAMAP" id="MF_01015">
    <property type="entry name" value="YbjL"/>
    <property type="match status" value="1"/>
</dbReference>
<dbReference type="InterPro" id="IPR050144">
    <property type="entry name" value="AAE_transporter"/>
</dbReference>
<dbReference type="InterPro" id="IPR006037">
    <property type="entry name" value="RCK_C"/>
</dbReference>
<dbReference type="InterPro" id="IPR036721">
    <property type="entry name" value="RCK_C_sf"/>
</dbReference>
<dbReference type="InterPro" id="IPR023017">
    <property type="entry name" value="Transp_YbjL_put"/>
</dbReference>
<dbReference type="InterPro" id="IPR006512">
    <property type="entry name" value="YidE_YbjL"/>
</dbReference>
<dbReference type="NCBIfam" id="NF003440">
    <property type="entry name" value="PRK04972.1"/>
    <property type="match status" value="1"/>
</dbReference>
<dbReference type="NCBIfam" id="TIGR01625">
    <property type="entry name" value="YidE_YbjL_dupl"/>
    <property type="match status" value="2"/>
</dbReference>
<dbReference type="PANTHER" id="PTHR30445">
    <property type="entry name" value="K(+)_H(+) ANTIPORTER SUBUNIT KHTT"/>
    <property type="match status" value="1"/>
</dbReference>
<dbReference type="PANTHER" id="PTHR30445:SF10">
    <property type="entry name" value="TRANSPORT PROTEIN YBJL-RELATED"/>
    <property type="match status" value="1"/>
</dbReference>
<dbReference type="Pfam" id="PF06826">
    <property type="entry name" value="Asp-Al_Ex"/>
    <property type="match status" value="2"/>
</dbReference>
<dbReference type="Pfam" id="PF02080">
    <property type="entry name" value="TrkA_C"/>
    <property type="match status" value="2"/>
</dbReference>
<dbReference type="SUPFAM" id="SSF116726">
    <property type="entry name" value="TrkA C-terminal domain-like"/>
    <property type="match status" value="2"/>
</dbReference>
<dbReference type="PROSITE" id="PS51202">
    <property type="entry name" value="RCK_C"/>
    <property type="match status" value="2"/>
</dbReference>
<evidence type="ECO:0000255" key="1">
    <source>
        <dbReference type="HAMAP-Rule" id="MF_01015"/>
    </source>
</evidence>
<feature type="chain" id="PRO_1000148993" description="Putative transport protein YbjL">
    <location>
        <begin position="1"/>
        <end position="561"/>
    </location>
</feature>
<feature type="transmembrane region" description="Helical" evidence="1">
    <location>
        <begin position="8"/>
        <end position="28"/>
    </location>
</feature>
<feature type="transmembrane region" description="Helical" evidence="1">
    <location>
        <begin position="32"/>
        <end position="52"/>
    </location>
</feature>
<feature type="transmembrane region" description="Helical" evidence="1">
    <location>
        <begin position="66"/>
        <end position="86"/>
    </location>
</feature>
<feature type="transmembrane region" description="Helical" evidence="1">
    <location>
        <begin position="94"/>
        <end position="114"/>
    </location>
</feature>
<feature type="transmembrane region" description="Helical" evidence="1">
    <location>
        <begin position="158"/>
        <end position="178"/>
    </location>
</feature>
<feature type="transmembrane region" description="Helical" evidence="1">
    <location>
        <begin position="383"/>
        <end position="403"/>
    </location>
</feature>
<feature type="transmembrane region" description="Helical" evidence="1">
    <location>
        <begin position="406"/>
        <end position="426"/>
    </location>
</feature>
<feature type="transmembrane region" description="Helical" evidence="1">
    <location>
        <begin position="451"/>
        <end position="471"/>
    </location>
</feature>
<feature type="transmembrane region" description="Helical" evidence="1">
    <location>
        <begin position="475"/>
        <end position="495"/>
    </location>
</feature>
<feature type="transmembrane region" description="Helical" evidence="1">
    <location>
        <begin position="540"/>
        <end position="560"/>
    </location>
</feature>
<feature type="domain" description="RCK C-terminal 1" evidence="1">
    <location>
        <begin position="200"/>
        <end position="288"/>
    </location>
</feature>
<feature type="domain" description="RCK C-terminal 2" evidence="1">
    <location>
        <begin position="292"/>
        <end position="373"/>
    </location>
</feature>